<keyword id="KW-0143">Chaperone</keyword>
<keyword id="KW-0175">Coiled coil</keyword>
<keyword id="KW-0472">Membrane</keyword>
<keyword id="KW-0496">Mitochondrion</keyword>
<keyword id="KW-0999">Mitochondrion inner membrane</keyword>
<keyword id="KW-1185">Reference proteome</keyword>
<keyword id="KW-0809">Transit peptide</keyword>
<keyword id="KW-0812">Transmembrane</keyword>
<keyword id="KW-1133">Transmembrane helix</keyword>
<proteinExistence type="inferred from homology"/>
<name>INA17_VANPO</name>
<sequence length="180" mass="21675">MMIRNQLYRKCIIGGGRSILNGWVINGTVPNIGLRYLRSGIVTRSNEIKTLEDLSKLKNLDDVDPELIRKLINERTSELNIQNEMEMLKHIQNEERKTQDIPIKRFIRPTWMFLLMSSTFYLLGHYIWWKLEYDEVEKELDRQVTALEEELHNLIEEHRVHGENEAIKNKKHKHWYKFWS</sequence>
<accession>A7TGK3</accession>
<gene>
    <name evidence="1" type="primary">INA17</name>
    <name type="ORF">Kpol_1048p41</name>
</gene>
<feature type="transit peptide" description="Mitochondrion" evidence="2">
    <location>
        <begin position="1"/>
        <end position="36"/>
    </location>
</feature>
<feature type="chain" id="PRO_0000399881" description="Inner membrane assembly complex subunit 17" evidence="2">
    <location>
        <begin position="37"/>
        <end position="180"/>
    </location>
</feature>
<feature type="topological domain" description="Mitochondrial matrix" evidence="1">
    <location>
        <begin position="37"/>
        <end position="105"/>
    </location>
</feature>
<feature type="transmembrane region" description="Helical" evidence="2">
    <location>
        <begin position="106"/>
        <end position="128"/>
    </location>
</feature>
<feature type="topological domain" description="Mitochondrial intermembrane" evidence="1">
    <location>
        <begin position="129"/>
        <end position="180"/>
    </location>
</feature>
<feature type="coiled-coil region" evidence="2">
    <location>
        <begin position="129"/>
        <end position="163"/>
    </location>
</feature>
<evidence type="ECO:0000250" key="1">
    <source>
        <dbReference type="UniProtKB" id="Q02888"/>
    </source>
</evidence>
<evidence type="ECO:0000255" key="2"/>
<evidence type="ECO:0000305" key="3"/>
<organism>
    <name type="scientific">Vanderwaltozyma polyspora (strain ATCC 22028 / DSM 70294 / BCRC 21397 / CBS 2163 / NBRC 10782 / NRRL Y-8283 / UCD 57-17)</name>
    <name type="common">Kluyveromyces polysporus</name>
    <dbReference type="NCBI Taxonomy" id="436907"/>
    <lineage>
        <taxon>Eukaryota</taxon>
        <taxon>Fungi</taxon>
        <taxon>Dikarya</taxon>
        <taxon>Ascomycota</taxon>
        <taxon>Saccharomycotina</taxon>
        <taxon>Saccharomycetes</taxon>
        <taxon>Saccharomycetales</taxon>
        <taxon>Saccharomycetaceae</taxon>
        <taxon>Vanderwaltozyma</taxon>
    </lineage>
</organism>
<reference key="1">
    <citation type="journal article" date="2007" name="Proc. Natl. Acad. Sci. U.S.A.">
        <title>Independent sorting-out of thousands of duplicated gene pairs in two yeast species descended from a whole-genome duplication.</title>
        <authorList>
            <person name="Scannell D.R."/>
            <person name="Frank A.C."/>
            <person name="Conant G.C."/>
            <person name="Byrne K.P."/>
            <person name="Woolfit M."/>
            <person name="Wolfe K.H."/>
        </authorList>
    </citation>
    <scope>NUCLEOTIDE SEQUENCE [LARGE SCALE GENOMIC DNA]</scope>
    <source>
        <strain>ATCC 22028 / DSM 70294 / BCRC 21397 / CBS 2163 / NBRC 10782 / NRRL Y-8283 / UCD 57-17</strain>
    </source>
</reference>
<protein>
    <recommendedName>
        <fullName evidence="1">Inner membrane assembly complex subunit 17</fullName>
    </recommendedName>
</protein>
<comment type="function">
    <text evidence="1">Component of the INA complex (INAC) that promotes the biogenesis of mitochondrial F(1)F(0)-ATP synthase. INAC facilitates the assembly of the peripheral stalk and promotes the assembly of the catalytic F(1)-domain with the membrane-embedded F(0)-domain.</text>
</comment>
<comment type="subunit">
    <text evidence="1">Component of the inner membrane assembly (INA) complex, composed of INA17 and INA22. Interacts with a subset of F(1)F(0)-ATP synthase subunits of the F(1)-domain and the peripheral stalk.</text>
</comment>
<comment type="subcellular location">
    <subcellularLocation>
        <location evidence="1">Mitochondrion inner membrane</location>
        <topology evidence="2">Single-pass membrane protein</topology>
    </subcellularLocation>
</comment>
<comment type="similarity">
    <text evidence="3">Belongs to the INA17 family.</text>
</comment>
<dbReference type="EMBL" id="DS480387">
    <property type="protein sequence ID" value="EDO18610.1"/>
    <property type="molecule type" value="Genomic_DNA"/>
</dbReference>
<dbReference type="RefSeq" id="XP_001646468.1">
    <property type="nucleotide sequence ID" value="XM_001646418.1"/>
</dbReference>
<dbReference type="SMR" id="A7TGK3"/>
<dbReference type="FunCoup" id="A7TGK3">
    <property type="interactions" value="58"/>
</dbReference>
<dbReference type="GeneID" id="5546910"/>
<dbReference type="KEGG" id="vpo:Kpol_1048p41"/>
<dbReference type="eggNOG" id="ENOG502S3U1">
    <property type="taxonomic scope" value="Eukaryota"/>
</dbReference>
<dbReference type="HOGENOM" id="CLU_127263_0_0_1"/>
<dbReference type="InParanoid" id="A7TGK3"/>
<dbReference type="OrthoDB" id="4082954at2759"/>
<dbReference type="PhylomeDB" id="A7TGK3"/>
<dbReference type="Proteomes" id="UP000000267">
    <property type="component" value="Unassembled WGS sequence"/>
</dbReference>
<dbReference type="GO" id="GO:1990524">
    <property type="term" value="C:INA complex"/>
    <property type="evidence" value="ECO:0007669"/>
    <property type="project" value="EnsemblFungi"/>
</dbReference>
<dbReference type="GO" id="GO:1990677">
    <property type="term" value="C:mitochondrial inner membrane assembly complex"/>
    <property type="evidence" value="ECO:0007669"/>
    <property type="project" value="EnsemblFungi"/>
</dbReference>
<dbReference type="GO" id="GO:0033615">
    <property type="term" value="P:mitochondrial proton-transporting ATP synthase complex assembly"/>
    <property type="evidence" value="ECO:0007669"/>
    <property type="project" value="EnsemblFungi"/>
</dbReference>